<reference key="1">
    <citation type="journal article" date="2004" name="Nucleic Acids Res.">
        <title>Thermoadaptation trait revealed by the genome sequence of thermophilic Geobacillus kaustophilus.</title>
        <authorList>
            <person name="Takami H."/>
            <person name="Takaki Y."/>
            <person name="Chee G.-J."/>
            <person name="Nishi S."/>
            <person name="Shimamura S."/>
            <person name="Suzuki H."/>
            <person name="Matsui S."/>
            <person name="Uchiyama I."/>
        </authorList>
    </citation>
    <scope>NUCLEOTIDE SEQUENCE [LARGE SCALE GENOMIC DNA]</scope>
    <source>
        <strain>HTA426</strain>
    </source>
</reference>
<keyword id="KW-0031">Aminopeptidase</keyword>
<keyword id="KW-0963">Cytoplasm</keyword>
<keyword id="KW-0378">Hydrolase</keyword>
<keyword id="KW-0479">Metal-binding</keyword>
<keyword id="KW-0482">Metalloprotease</keyword>
<keyword id="KW-0645">Protease</keyword>
<keyword id="KW-1185">Reference proteome</keyword>
<keyword id="KW-0862">Zinc</keyword>
<gene>
    <name evidence="1" type="primary">pepT</name>
    <name type="ordered locus">GK1762</name>
</gene>
<feature type="chain" id="PRO_0000185297" description="Peptidase T">
    <location>
        <begin position="1"/>
        <end position="411"/>
    </location>
</feature>
<feature type="active site" evidence="1">
    <location>
        <position position="81"/>
    </location>
</feature>
<feature type="active site" description="Proton acceptor" evidence="1">
    <location>
        <position position="176"/>
    </location>
</feature>
<feature type="binding site" evidence="1">
    <location>
        <position position="79"/>
    </location>
    <ligand>
        <name>Zn(2+)</name>
        <dbReference type="ChEBI" id="CHEBI:29105"/>
        <label>1</label>
    </ligand>
</feature>
<feature type="binding site" evidence="1">
    <location>
        <position position="142"/>
    </location>
    <ligand>
        <name>Zn(2+)</name>
        <dbReference type="ChEBI" id="CHEBI:29105"/>
        <label>1</label>
    </ligand>
</feature>
<feature type="binding site" evidence="1">
    <location>
        <position position="142"/>
    </location>
    <ligand>
        <name>Zn(2+)</name>
        <dbReference type="ChEBI" id="CHEBI:29105"/>
        <label>2</label>
    </ligand>
</feature>
<feature type="binding site" evidence="1">
    <location>
        <position position="177"/>
    </location>
    <ligand>
        <name>Zn(2+)</name>
        <dbReference type="ChEBI" id="CHEBI:29105"/>
        <label>2</label>
    </ligand>
</feature>
<feature type="binding site" evidence="1">
    <location>
        <position position="199"/>
    </location>
    <ligand>
        <name>Zn(2+)</name>
        <dbReference type="ChEBI" id="CHEBI:29105"/>
        <label>1</label>
    </ligand>
</feature>
<feature type="binding site" evidence="1">
    <location>
        <position position="381"/>
    </location>
    <ligand>
        <name>Zn(2+)</name>
        <dbReference type="ChEBI" id="CHEBI:29105"/>
        <label>2</label>
    </ligand>
</feature>
<comment type="function">
    <text evidence="1">Cleaves the N-terminal amino acid of tripeptides.</text>
</comment>
<comment type="catalytic activity">
    <reaction evidence="1">
        <text>Release of the N-terminal residue from a tripeptide.</text>
        <dbReference type="EC" id="3.4.11.4"/>
    </reaction>
</comment>
<comment type="cofactor">
    <cofactor evidence="1">
        <name>Zn(2+)</name>
        <dbReference type="ChEBI" id="CHEBI:29105"/>
    </cofactor>
    <text evidence="1">Binds 2 Zn(2+) ions per subunit.</text>
</comment>
<comment type="subcellular location">
    <subcellularLocation>
        <location evidence="1">Cytoplasm</location>
    </subcellularLocation>
</comment>
<comment type="similarity">
    <text evidence="1">Belongs to the peptidase M20B family.</text>
</comment>
<accession>Q5KZ39</accession>
<proteinExistence type="inferred from homology"/>
<dbReference type="EC" id="3.4.11.4" evidence="1"/>
<dbReference type="EMBL" id="BA000043">
    <property type="protein sequence ID" value="BAD76047.1"/>
    <property type="molecule type" value="Genomic_DNA"/>
</dbReference>
<dbReference type="RefSeq" id="WP_011231254.1">
    <property type="nucleotide sequence ID" value="NC_006510.1"/>
</dbReference>
<dbReference type="SMR" id="Q5KZ39"/>
<dbReference type="STRING" id="235909.GK1762"/>
<dbReference type="MEROPS" id="M20.003"/>
<dbReference type="GeneID" id="32063644"/>
<dbReference type="KEGG" id="gka:GK1762"/>
<dbReference type="eggNOG" id="COG2195">
    <property type="taxonomic scope" value="Bacteria"/>
</dbReference>
<dbReference type="HOGENOM" id="CLU_053676_0_0_9"/>
<dbReference type="Proteomes" id="UP000001172">
    <property type="component" value="Chromosome"/>
</dbReference>
<dbReference type="GO" id="GO:0005829">
    <property type="term" value="C:cytosol"/>
    <property type="evidence" value="ECO:0007669"/>
    <property type="project" value="TreeGrafter"/>
</dbReference>
<dbReference type="GO" id="GO:0008237">
    <property type="term" value="F:metallopeptidase activity"/>
    <property type="evidence" value="ECO:0007669"/>
    <property type="project" value="UniProtKB-KW"/>
</dbReference>
<dbReference type="GO" id="GO:0045148">
    <property type="term" value="F:tripeptide aminopeptidase activity"/>
    <property type="evidence" value="ECO:0007669"/>
    <property type="project" value="UniProtKB-UniRule"/>
</dbReference>
<dbReference type="GO" id="GO:0008270">
    <property type="term" value="F:zinc ion binding"/>
    <property type="evidence" value="ECO:0007669"/>
    <property type="project" value="UniProtKB-UniRule"/>
</dbReference>
<dbReference type="GO" id="GO:0043171">
    <property type="term" value="P:peptide catabolic process"/>
    <property type="evidence" value="ECO:0007669"/>
    <property type="project" value="UniProtKB-UniRule"/>
</dbReference>
<dbReference type="GO" id="GO:0006508">
    <property type="term" value="P:proteolysis"/>
    <property type="evidence" value="ECO:0007669"/>
    <property type="project" value="UniProtKB-UniRule"/>
</dbReference>
<dbReference type="CDD" id="cd03892">
    <property type="entry name" value="M20_peptT"/>
    <property type="match status" value="1"/>
</dbReference>
<dbReference type="FunFam" id="3.30.70.360:FF:000002">
    <property type="entry name" value="Peptidase T"/>
    <property type="match status" value="1"/>
</dbReference>
<dbReference type="Gene3D" id="3.30.70.360">
    <property type="match status" value="1"/>
</dbReference>
<dbReference type="Gene3D" id="3.40.630.10">
    <property type="entry name" value="Zn peptidases"/>
    <property type="match status" value="1"/>
</dbReference>
<dbReference type="HAMAP" id="MF_00550">
    <property type="entry name" value="Aminopeptidase_M20"/>
    <property type="match status" value="1"/>
</dbReference>
<dbReference type="InterPro" id="IPR001261">
    <property type="entry name" value="ArgE/DapE_CS"/>
</dbReference>
<dbReference type="InterPro" id="IPR036264">
    <property type="entry name" value="Bact_exopeptidase_dim_dom"/>
</dbReference>
<dbReference type="InterPro" id="IPR002933">
    <property type="entry name" value="Peptidase_M20"/>
</dbReference>
<dbReference type="InterPro" id="IPR011650">
    <property type="entry name" value="Peptidase_M20_dimer"/>
</dbReference>
<dbReference type="InterPro" id="IPR010161">
    <property type="entry name" value="Peptidase_M20B"/>
</dbReference>
<dbReference type="NCBIfam" id="TIGR01882">
    <property type="entry name" value="peptidase-T"/>
    <property type="match status" value="1"/>
</dbReference>
<dbReference type="NCBIfam" id="NF003976">
    <property type="entry name" value="PRK05469.1"/>
    <property type="match status" value="1"/>
</dbReference>
<dbReference type="NCBIfam" id="NF009920">
    <property type="entry name" value="PRK13381.1"/>
    <property type="match status" value="1"/>
</dbReference>
<dbReference type="PANTHER" id="PTHR42994">
    <property type="entry name" value="PEPTIDASE T"/>
    <property type="match status" value="1"/>
</dbReference>
<dbReference type="PANTHER" id="PTHR42994:SF1">
    <property type="entry name" value="PEPTIDASE T"/>
    <property type="match status" value="1"/>
</dbReference>
<dbReference type="Pfam" id="PF07687">
    <property type="entry name" value="M20_dimer"/>
    <property type="match status" value="1"/>
</dbReference>
<dbReference type="Pfam" id="PF01546">
    <property type="entry name" value="Peptidase_M20"/>
    <property type="match status" value="1"/>
</dbReference>
<dbReference type="PIRSF" id="PIRSF037215">
    <property type="entry name" value="Peptidase_M20B"/>
    <property type="match status" value="1"/>
</dbReference>
<dbReference type="SUPFAM" id="SSF55031">
    <property type="entry name" value="Bacterial exopeptidase dimerisation domain"/>
    <property type="match status" value="1"/>
</dbReference>
<dbReference type="SUPFAM" id="SSF53187">
    <property type="entry name" value="Zn-dependent exopeptidases"/>
    <property type="match status" value="1"/>
</dbReference>
<dbReference type="PROSITE" id="PS00758">
    <property type="entry name" value="ARGE_DAPE_CPG2_1"/>
    <property type="match status" value="1"/>
</dbReference>
<dbReference type="PROSITE" id="PS00759">
    <property type="entry name" value="ARGE_DAPE_CPG2_2"/>
    <property type="match status" value="1"/>
</dbReference>
<protein>
    <recommendedName>
        <fullName evidence="1">Peptidase T</fullName>
        <ecNumber evidence="1">3.4.11.4</ecNumber>
    </recommendedName>
    <alternativeName>
        <fullName evidence="1">Aminotripeptidase</fullName>
        <shortName evidence="1">Tripeptidase</shortName>
    </alternativeName>
    <alternativeName>
        <fullName evidence="1">Tripeptide aminopeptidase</fullName>
    </alternativeName>
</protein>
<organism>
    <name type="scientific">Geobacillus kaustophilus (strain HTA426)</name>
    <dbReference type="NCBI Taxonomy" id="235909"/>
    <lineage>
        <taxon>Bacteria</taxon>
        <taxon>Bacillati</taxon>
        <taxon>Bacillota</taxon>
        <taxon>Bacilli</taxon>
        <taxon>Bacillales</taxon>
        <taxon>Anoxybacillaceae</taxon>
        <taxon>Geobacillus</taxon>
        <taxon>Geobacillus thermoleovorans group</taxon>
    </lineage>
</organism>
<evidence type="ECO:0000255" key="1">
    <source>
        <dbReference type="HAMAP-Rule" id="MF_00550"/>
    </source>
</evidence>
<name>PEPT_GEOKA</name>
<sequence length="411" mass="45750">MKQELIERFIRYAKVNTQSDPNSHTCPSTSGQWELARMLVEELKAIGMEDVTIDDNGYVMATLPANTDKNVPVIGFLAHMDTAPEFTGANVNPQLIDSYDGGDIVLNKEQGIILSPNDFPELAHYKGHTLITTDGTTLLGADDKAGIAEIMTAMNYLIQHPEIKHGKVRVAFTPDEEIGRGPHKFDVAKFGAQFAYTVDGGPLGELEYESFNAAEAKITIKGKNVHPGTAKGKMINSIKIAMEFEQQLPAHEAPEHTEGYEGFYHLLSFQGSVEETKLHYIIRDFDREQFEARKAKMKEIAASLAQKYGNDRITLEINDQYYNMREKIEPVRHIVDIAHEAMTNLGIEPKVKPIRGGTDGSQLSYMGLPTPNLFAGGENFHGRYEYISADNMVKAAEVIVEIIKLFEQKAS</sequence>